<reference key="1">
    <citation type="journal article" date="2005" name="Nature">
        <title>The genome of the social amoeba Dictyostelium discoideum.</title>
        <authorList>
            <person name="Eichinger L."/>
            <person name="Pachebat J.A."/>
            <person name="Gloeckner G."/>
            <person name="Rajandream M.A."/>
            <person name="Sucgang R."/>
            <person name="Berriman M."/>
            <person name="Song J."/>
            <person name="Olsen R."/>
            <person name="Szafranski K."/>
            <person name="Xu Q."/>
            <person name="Tunggal B."/>
            <person name="Kummerfeld S."/>
            <person name="Madera M."/>
            <person name="Konfortov B.A."/>
            <person name="Rivero F."/>
            <person name="Bankier A.T."/>
            <person name="Lehmann R."/>
            <person name="Hamlin N."/>
            <person name="Davies R."/>
            <person name="Gaudet P."/>
            <person name="Fey P."/>
            <person name="Pilcher K."/>
            <person name="Chen G."/>
            <person name="Saunders D."/>
            <person name="Sodergren E.J."/>
            <person name="Davis P."/>
            <person name="Kerhornou A."/>
            <person name="Nie X."/>
            <person name="Hall N."/>
            <person name="Anjard C."/>
            <person name="Hemphill L."/>
            <person name="Bason N."/>
            <person name="Farbrother P."/>
            <person name="Desany B."/>
            <person name="Just E."/>
            <person name="Morio T."/>
            <person name="Rost R."/>
            <person name="Churcher C.M."/>
            <person name="Cooper J."/>
            <person name="Haydock S."/>
            <person name="van Driessche N."/>
            <person name="Cronin A."/>
            <person name="Goodhead I."/>
            <person name="Muzny D.M."/>
            <person name="Mourier T."/>
            <person name="Pain A."/>
            <person name="Lu M."/>
            <person name="Harper D."/>
            <person name="Lindsay R."/>
            <person name="Hauser H."/>
            <person name="James K.D."/>
            <person name="Quiles M."/>
            <person name="Madan Babu M."/>
            <person name="Saito T."/>
            <person name="Buchrieser C."/>
            <person name="Wardroper A."/>
            <person name="Felder M."/>
            <person name="Thangavelu M."/>
            <person name="Johnson D."/>
            <person name="Knights A."/>
            <person name="Loulseged H."/>
            <person name="Mungall K.L."/>
            <person name="Oliver K."/>
            <person name="Price C."/>
            <person name="Quail M.A."/>
            <person name="Urushihara H."/>
            <person name="Hernandez J."/>
            <person name="Rabbinowitsch E."/>
            <person name="Steffen D."/>
            <person name="Sanders M."/>
            <person name="Ma J."/>
            <person name="Kohara Y."/>
            <person name="Sharp S."/>
            <person name="Simmonds M.N."/>
            <person name="Spiegler S."/>
            <person name="Tivey A."/>
            <person name="Sugano S."/>
            <person name="White B."/>
            <person name="Walker D."/>
            <person name="Woodward J.R."/>
            <person name="Winckler T."/>
            <person name="Tanaka Y."/>
            <person name="Shaulsky G."/>
            <person name="Schleicher M."/>
            <person name="Weinstock G.M."/>
            <person name="Rosenthal A."/>
            <person name="Cox E.C."/>
            <person name="Chisholm R.L."/>
            <person name="Gibbs R.A."/>
            <person name="Loomis W.F."/>
            <person name="Platzer M."/>
            <person name="Kay R.R."/>
            <person name="Williams J.G."/>
            <person name="Dear P.H."/>
            <person name="Noegel A.A."/>
            <person name="Barrell B.G."/>
            <person name="Kuspa A."/>
        </authorList>
    </citation>
    <scope>NUCLEOTIDE SEQUENCE [LARGE SCALE GENOMIC DNA]</scope>
    <source>
        <strain>AX4</strain>
    </source>
</reference>
<protein>
    <recommendedName>
        <fullName evidence="2 4">Actin-related protein 6</fullName>
    </recommendedName>
</protein>
<proteinExistence type="inferred from homology"/>
<comment type="subcellular location">
    <subcellularLocation>
        <location evidence="1">Cytoplasm</location>
        <location evidence="1">Cytoskeleton</location>
    </subcellularLocation>
</comment>
<comment type="similarity">
    <text evidence="3">Belongs to the actin family. ARP6 subfamily.</text>
</comment>
<organism>
    <name type="scientific">Dictyostelium discoideum</name>
    <name type="common">Social amoeba</name>
    <dbReference type="NCBI Taxonomy" id="44689"/>
    <lineage>
        <taxon>Eukaryota</taxon>
        <taxon>Amoebozoa</taxon>
        <taxon>Evosea</taxon>
        <taxon>Eumycetozoa</taxon>
        <taxon>Dictyostelia</taxon>
        <taxon>Dictyosteliales</taxon>
        <taxon>Dictyosteliaceae</taxon>
        <taxon>Dictyostelium</taxon>
    </lineage>
</organism>
<evidence type="ECO:0000250" key="1">
    <source>
        <dbReference type="UniProtKB" id="Q8LGE3"/>
    </source>
</evidence>
<evidence type="ECO:0000250" key="2">
    <source>
        <dbReference type="UniProtKB" id="Q9GZN1"/>
    </source>
</evidence>
<evidence type="ECO:0000255" key="3"/>
<evidence type="ECO:0000312" key="4">
    <source>
        <dbReference type="EMBL" id="EAL63930.1"/>
    </source>
</evidence>
<dbReference type="EMBL" id="AAFI02000095">
    <property type="protein sequence ID" value="EAL63930.1"/>
    <property type="molecule type" value="Genomic_DNA"/>
</dbReference>
<dbReference type="RefSeq" id="XP_637435.1">
    <property type="nucleotide sequence ID" value="XM_632343.1"/>
</dbReference>
<dbReference type="SMR" id="Q54KZ7"/>
<dbReference type="FunCoup" id="Q54KZ7">
    <property type="interactions" value="77"/>
</dbReference>
<dbReference type="STRING" id="44689.Q54KZ7"/>
<dbReference type="PaxDb" id="44689-DDB0234010"/>
<dbReference type="EnsemblProtists" id="EAL63930">
    <property type="protein sequence ID" value="EAL63930"/>
    <property type="gene ID" value="DDB_G0287007"/>
</dbReference>
<dbReference type="GeneID" id="8625904"/>
<dbReference type="KEGG" id="ddi:DDB_G0287007"/>
<dbReference type="dictyBase" id="DDB_G0287007">
    <property type="gene designation" value="arpF"/>
</dbReference>
<dbReference type="VEuPathDB" id="AmoebaDB:DDB_G0287007"/>
<dbReference type="eggNOG" id="KOG0680">
    <property type="taxonomic scope" value="Eukaryota"/>
</dbReference>
<dbReference type="HOGENOM" id="CLU_027965_1_1_1"/>
<dbReference type="InParanoid" id="Q54KZ7"/>
<dbReference type="OMA" id="FFEEYEC"/>
<dbReference type="PhylomeDB" id="Q54KZ7"/>
<dbReference type="PRO" id="PR:Q54KZ7"/>
<dbReference type="Proteomes" id="UP000002195">
    <property type="component" value="Chromosome 4"/>
</dbReference>
<dbReference type="GO" id="GO:0005737">
    <property type="term" value="C:cytoplasm"/>
    <property type="evidence" value="ECO:0007669"/>
    <property type="project" value="UniProtKB-KW"/>
</dbReference>
<dbReference type="GO" id="GO:0005856">
    <property type="term" value="C:cytoskeleton"/>
    <property type="evidence" value="ECO:0007669"/>
    <property type="project" value="UniProtKB-SubCell"/>
</dbReference>
<dbReference type="GO" id="GO:0000812">
    <property type="term" value="C:Swr1 complex"/>
    <property type="evidence" value="ECO:0000318"/>
    <property type="project" value="GO_Central"/>
</dbReference>
<dbReference type="GO" id="GO:0031491">
    <property type="term" value="F:nucleosome binding"/>
    <property type="evidence" value="ECO:0000318"/>
    <property type="project" value="GO_Central"/>
</dbReference>
<dbReference type="CDD" id="cd10210">
    <property type="entry name" value="ASKHA_NBD_Arp6"/>
    <property type="match status" value="1"/>
</dbReference>
<dbReference type="FunFam" id="3.30.420.40:FF:000187">
    <property type="entry name" value="Actin-related protein 6"/>
    <property type="match status" value="1"/>
</dbReference>
<dbReference type="FunFam" id="3.30.420.40:FF:000058">
    <property type="entry name" value="Putative actin-related protein 5"/>
    <property type="match status" value="1"/>
</dbReference>
<dbReference type="FunFam" id="3.90.640.10:FF:000014">
    <property type="entry name" value="Putative actin-related protein 6"/>
    <property type="match status" value="1"/>
</dbReference>
<dbReference type="Gene3D" id="3.30.420.40">
    <property type="match status" value="4"/>
</dbReference>
<dbReference type="Gene3D" id="3.90.640.10">
    <property type="entry name" value="Actin, Chain A, domain 4"/>
    <property type="match status" value="2"/>
</dbReference>
<dbReference type="InterPro" id="IPR004000">
    <property type="entry name" value="Actin"/>
</dbReference>
<dbReference type="InterPro" id="IPR043129">
    <property type="entry name" value="ATPase_NBD"/>
</dbReference>
<dbReference type="PANTHER" id="PTHR11937">
    <property type="entry name" value="ACTIN"/>
    <property type="match status" value="1"/>
</dbReference>
<dbReference type="Pfam" id="PF00022">
    <property type="entry name" value="Actin"/>
    <property type="match status" value="1"/>
</dbReference>
<dbReference type="SMART" id="SM00268">
    <property type="entry name" value="ACTIN"/>
    <property type="match status" value="1"/>
</dbReference>
<dbReference type="SUPFAM" id="SSF53067">
    <property type="entry name" value="Actin-like ATPase domain"/>
    <property type="match status" value="2"/>
</dbReference>
<sequence length="490" mass="56448">MTSNTGMLPLTPGLGPLAPSIYASNTNNKVLIIDNGGHTLKIATNNPSQPHIIVPNQVGKVKNEKHQIMGEELINYNDPSEVRSRNPMEKGYITNWGLEKEIWDYAFKRDDMKIKPQDYNLLLTEAPNSLDDLRKTMYEVVYEQYKFKSLYLTTSSTLGLVHIKQQLLQYQQQQHQPPLDASMISLLKSPCHLVVDCGYSSTHIIPHFQNTRLNYAIKRFNIGGKLLTNYLKEIVSFRYWDMMHETKLMNTIKEKTCFISKDFIFDIKRSQIDKLNSNLKIDYVLPNYNDPNNKTGYIKENLNNNNNNNDKNDKLNVNIEKDKDNNDIKSKEEGEEIKLNDEIKKDSTTTTNTTKEEDMEQVLSLVNERFTVPELLFNPSDIGMNQAGLAESIVQSINCTNSNLHIPLYSNIILLGGSTLFPGLKERLELELRKLAPEQYNINIFQPQDPILSPLYGGIRLAQQPDYLKYSISKQDYEEYGYNYCNKKFF</sequence>
<keyword id="KW-0963">Cytoplasm</keyword>
<keyword id="KW-0206">Cytoskeleton</keyword>
<keyword id="KW-1185">Reference proteome</keyword>
<gene>
    <name evidence="4" type="primary">arpF</name>
    <name evidence="2" type="synonym">actr6</name>
    <name type="ORF">DDB_G0287007</name>
</gene>
<name>ARP6_DICDI</name>
<feature type="chain" id="PRO_0000370207" description="Actin-related protein 6">
    <location>
        <begin position="1"/>
        <end position="490"/>
    </location>
</feature>
<accession>Q54KZ7</accession>